<evidence type="ECO:0000256" key="1">
    <source>
        <dbReference type="SAM" id="MobiDB-lite"/>
    </source>
</evidence>
<reference key="1">
    <citation type="journal article" date="2005" name="J. Bacteriol.">
        <title>Structure and genome organization of AFV2, a novel archaeal lipothrixvirus with unusual terminal and core structures.</title>
        <authorList>
            <person name="Haring M."/>
            <person name="Vestergaard G."/>
            <person name="Brugger K."/>
            <person name="Rachel R."/>
            <person name="Garrett R.A."/>
            <person name="Prangishvili D."/>
        </authorList>
    </citation>
    <scope>NUCLEOTIDE SEQUENCE [GENOMIC DNA]</scope>
</reference>
<name>Y178_AFV2P</name>
<protein>
    <recommendedName>
        <fullName>Uncharacterized protein ORF178</fullName>
    </recommendedName>
</protein>
<organismHost>
    <name type="scientific">Acidianus sp. F28</name>
    <dbReference type="NCBI Taxonomy" id="315458"/>
</organismHost>
<accession>Q573F9</accession>
<sequence length="178" mass="19152">MTDINYYVDLLKRNLPKYKKLKVNTLSESEAKEVVAKLLADGFGVELQSGNTFVLKSSSIPPVGVSDNTNKTTAKDNVSDKSSENEVAQPKQVTPPVDATGNTNKTAVTSMRVSIRLPAQVADALLSVYNEPNLSNAIRKAIKDALSAKGISVQFPAPVTTTTAKKSIPSIDEVFRND</sequence>
<keyword id="KW-1185">Reference proteome</keyword>
<dbReference type="EMBL" id="AJ854042">
    <property type="protein sequence ID" value="CAH69397.1"/>
    <property type="molecule type" value="Genomic_DNA"/>
</dbReference>
<dbReference type="RefSeq" id="YP_001496935.1">
    <property type="nucleotide sequence ID" value="NC_009884.1"/>
</dbReference>
<dbReference type="SMR" id="Q573F9"/>
<dbReference type="KEGG" id="vg:5656059"/>
<dbReference type="Proteomes" id="UP000006364">
    <property type="component" value="Genome"/>
</dbReference>
<gene>
    <name type="ORF">ORF178</name>
</gene>
<feature type="chain" id="PRO_0000384514" description="Uncharacterized protein ORF178">
    <location>
        <begin position="1"/>
        <end position="178"/>
    </location>
</feature>
<feature type="region of interest" description="Disordered" evidence="1">
    <location>
        <begin position="64"/>
        <end position="103"/>
    </location>
</feature>
<feature type="compositionally biased region" description="Basic and acidic residues" evidence="1">
    <location>
        <begin position="73"/>
        <end position="84"/>
    </location>
</feature>
<proteinExistence type="predicted"/>
<organism>
    <name type="scientific">Acidianus filamentous virus 2 (isolate Italy/Pozzuoli)</name>
    <name type="common">AFV-2</name>
    <dbReference type="NCBI Taxonomy" id="654910"/>
    <lineage>
        <taxon>Viruses</taxon>
        <taxon>Adnaviria</taxon>
        <taxon>Zilligvirae</taxon>
        <taxon>Taleaviricota</taxon>
        <taxon>Tokiviricetes</taxon>
        <taxon>Ligamenvirales</taxon>
        <taxon>Lipothrixviridae</taxon>
        <taxon>Deltalipothrixvirus</taxon>
        <taxon>Acidianus filamentous virus 2</taxon>
    </lineage>
</organism>